<gene>
    <name evidence="1" type="primary">tal</name>
    <name type="ordered locus">Maeo_0278</name>
</gene>
<feature type="chain" id="PRO_1000060469" description="Probable transaldolase">
    <location>
        <begin position="1"/>
        <end position="216"/>
    </location>
</feature>
<feature type="active site" description="Schiff-base intermediate with substrate" evidence="1">
    <location>
        <position position="83"/>
    </location>
</feature>
<protein>
    <recommendedName>
        <fullName evidence="1">Probable transaldolase</fullName>
        <ecNumber evidence="1">2.2.1.2</ecNumber>
    </recommendedName>
</protein>
<reference key="1">
    <citation type="submission" date="2007-06" db="EMBL/GenBank/DDBJ databases">
        <title>Complete sequence of Methanococcus aeolicus Nankai-3.</title>
        <authorList>
            <consortium name="US DOE Joint Genome Institute"/>
            <person name="Copeland A."/>
            <person name="Lucas S."/>
            <person name="Lapidus A."/>
            <person name="Barry K."/>
            <person name="Glavina del Rio T."/>
            <person name="Dalin E."/>
            <person name="Tice H."/>
            <person name="Pitluck S."/>
            <person name="Chain P."/>
            <person name="Malfatti S."/>
            <person name="Shin M."/>
            <person name="Vergez L."/>
            <person name="Schmutz J."/>
            <person name="Larimer F."/>
            <person name="Land M."/>
            <person name="Hauser L."/>
            <person name="Kyrpides N."/>
            <person name="Lykidis A."/>
            <person name="Sieprawska-Lupa M."/>
            <person name="Whitman W.B."/>
            <person name="Richardson P."/>
        </authorList>
    </citation>
    <scope>NUCLEOTIDE SEQUENCE [LARGE SCALE GENOMIC DNA]</scope>
    <source>
        <strain>ATCC BAA-1280 / DSM 17508 / OCM 812 / Nankai-3</strain>
    </source>
</reference>
<dbReference type="EC" id="2.2.1.2" evidence="1"/>
<dbReference type="EMBL" id="CP000743">
    <property type="protein sequence ID" value="ABR55867.1"/>
    <property type="molecule type" value="Genomic_DNA"/>
</dbReference>
<dbReference type="RefSeq" id="WP_011972999.1">
    <property type="nucleotide sequence ID" value="NC_009635.1"/>
</dbReference>
<dbReference type="SMR" id="A6UTP5"/>
<dbReference type="STRING" id="419665.Maeo_0278"/>
<dbReference type="GeneID" id="5326466"/>
<dbReference type="KEGG" id="mae:Maeo_0278"/>
<dbReference type="eggNOG" id="arCOG05061">
    <property type="taxonomic scope" value="Archaea"/>
</dbReference>
<dbReference type="HOGENOM" id="CLU_079764_0_0_2"/>
<dbReference type="OrthoDB" id="6661at2157"/>
<dbReference type="UniPathway" id="UPA00115">
    <property type="reaction ID" value="UER00414"/>
</dbReference>
<dbReference type="Proteomes" id="UP000001106">
    <property type="component" value="Chromosome"/>
</dbReference>
<dbReference type="GO" id="GO:0005737">
    <property type="term" value="C:cytoplasm"/>
    <property type="evidence" value="ECO:0007669"/>
    <property type="project" value="UniProtKB-SubCell"/>
</dbReference>
<dbReference type="GO" id="GO:0016832">
    <property type="term" value="F:aldehyde-lyase activity"/>
    <property type="evidence" value="ECO:0007669"/>
    <property type="project" value="InterPro"/>
</dbReference>
<dbReference type="GO" id="GO:0004801">
    <property type="term" value="F:transaldolase activity"/>
    <property type="evidence" value="ECO:0007669"/>
    <property type="project" value="UniProtKB-UniRule"/>
</dbReference>
<dbReference type="GO" id="GO:0005975">
    <property type="term" value="P:carbohydrate metabolic process"/>
    <property type="evidence" value="ECO:0007669"/>
    <property type="project" value="InterPro"/>
</dbReference>
<dbReference type="GO" id="GO:0006098">
    <property type="term" value="P:pentose-phosphate shunt"/>
    <property type="evidence" value="ECO:0007669"/>
    <property type="project" value="UniProtKB-UniRule"/>
</dbReference>
<dbReference type="CDD" id="cd00956">
    <property type="entry name" value="Transaldolase_FSA"/>
    <property type="match status" value="1"/>
</dbReference>
<dbReference type="FunFam" id="3.20.20.70:FF:000018">
    <property type="entry name" value="Probable transaldolase"/>
    <property type="match status" value="1"/>
</dbReference>
<dbReference type="Gene3D" id="3.20.20.70">
    <property type="entry name" value="Aldolase class I"/>
    <property type="match status" value="1"/>
</dbReference>
<dbReference type="HAMAP" id="MF_00494">
    <property type="entry name" value="Transaldolase_3b"/>
    <property type="match status" value="1"/>
</dbReference>
<dbReference type="InterPro" id="IPR013785">
    <property type="entry name" value="Aldolase_TIM"/>
</dbReference>
<dbReference type="InterPro" id="IPR001585">
    <property type="entry name" value="TAL/FSA"/>
</dbReference>
<dbReference type="InterPro" id="IPR022999">
    <property type="entry name" value="Transaldolase_3B"/>
</dbReference>
<dbReference type="InterPro" id="IPR004731">
    <property type="entry name" value="Transaldolase_3B/F6P_aldolase"/>
</dbReference>
<dbReference type="InterPro" id="IPR018225">
    <property type="entry name" value="Transaldolase_AS"/>
</dbReference>
<dbReference type="InterPro" id="IPR033919">
    <property type="entry name" value="TSA/FSA_arc/bac"/>
</dbReference>
<dbReference type="NCBIfam" id="TIGR00875">
    <property type="entry name" value="fsa_talC_mipB"/>
    <property type="match status" value="1"/>
</dbReference>
<dbReference type="PANTHER" id="PTHR10683:SF40">
    <property type="entry name" value="FRUCTOSE-6-PHOSPHATE ALDOLASE 1-RELATED"/>
    <property type="match status" value="1"/>
</dbReference>
<dbReference type="PANTHER" id="PTHR10683">
    <property type="entry name" value="TRANSALDOLASE"/>
    <property type="match status" value="1"/>
</dbReference>
<dbReference type="Pfam" id="PF00923">
    <property type="entry name" value="TAL_FSA"/>
    <property type="match status" value="1"/>
</dbReference>
<dbReference type="SUPFAM" id="SSF51569">
    <property type="entry name" value="Aldolase"/>
    <property type="match status" value="1"/>
</dbReference>
<dbReference type="PROSITE" id="PS01054">
    <property type="entry name" value="TRANSALDOLASE_1"/>
    <property type="match status" value="1"/>
</dbReference>
<organism>
    <name type="scientific">Methanococcus aeolicus (strain ATCC BAA-1280 / DSM 17508 / OCM 812 / Nankai-3)</name>
    <dbReference type="NCBI Taxonomy" id="419665"/>
    <lineage>
        <taxon>Archaea</taxon>
        <taxon>Methanobacteriati</taxon>
        <taxon>Methanobacteriota</taxon>
        <taxon>Methanomada group</taxon>
        <taxon>Methanococci</taxon>
        <taxon>Methanococcales</taxon>
        <taxon>Methanococcaceae</taxon>
        <taxon>Methanococcus</taxon>
    </lineage>
</organism>
<keyword id="KW-0963">Cytoplasm</keyword>
<keyword id="KW-0570">Pentose shunt</keyword>
<keyword id="KW-0704">Schiff base</keyword>
<keyword id="KW-0808">Transferase</keyword>
<evidence type="ECO:0000255" key="1">
    <source>
        <dbReference type="HAMAP-Rule" id="MF_00494"/>
    </source>
</evidence>
<comment type="function">
    <text evidence="1">Transaldolase is important for the balance of metabolites in the pentose-phosphate pathway.</text>
</comment>
<comment type="catalytic activity">
    <reaction evidence="1">
        <text>D-sedoheptulose 7-phosphate + D-glyceraldehyde 3-phosphate = D-erythrose 4-phosphate + beta-D-fructose 6-phosphate</text>
        <dbReference type="Rhea" id="RHEA:17053"/>
        <dbReference type="ChEBI" id="CHEBI:16897"/>
        <dbReference type="ChEBI" id="CHEBI:57483"/>
        <dbReference type="ChEBI" id="CHEBI:57634"/>
        <dbReference type="ChEBI" id="CHEBI:59776"/>
        <dbReference type="EC" id="2.2.1.2"/>
    </reaction>
</comment>
<comment type="pathway">
    <text evidence="1">Carbohydrate degradation; pentose phosphate pathway; D-glyceraldehyde 3-phosphate and beta-D-fructose 6-phosphate from D-ribose 5-phosphate and D-xylulose 5-phosphate (non-oxidative stage): step 2/3.</text>
</comment>
<comment type="subcellular location">
    <subcellularLocation>
        <location evidence="1">Cytoplasm</location>
    </subcellularLocation>
</comment>
<comment type="similarity">
    <text evidence="1">Belongs to the transaldolase family. Type 3B subfamily.</text>
</comment>
<proteinExistence type="inferred from homology"/>
<name>TAL_META3</name>
<accession>A6UTP5</accession>
<sequence>MKFFLDTANVDKIKEFNDLGMVDGVTTNPTLIAKEGRDFHEVIKEICSIVDGPVSAEVIALDAEGMIEEARELVKLADNVVVKIPMTKEGLKAVNVLSKEGIQTNVTLIFSANQALMAAKAGATYVSPFVGRLDDNGQNGMDLIAEIVQIFTNYGIATEVIVASVRHPIHVIQSAEMGADVATIPFAVLDKMFNHPLTDKGIESFMKDWEEFQKNK</sequence>